<gene>
    <name evidence="1" type="primary">acpS</name>
    <name type="ordered locus">Cpar_0277</name>
</gene>
<protein>
    <recommendedName>
        <fullName evidence="1">Holo-[acyl-carrier-protein] synthase</fullName>
        <shortName evidence="1">Holo-ACP synthase</shortName>
        <ecNumber evidence="1">2.7.8.7</ecNumber>
    </recommendedName>
    <alternativeName>
        <fullName evidence="1">4'-phosphopantetheinyl transferase AcpS</fullName>
    </alternativeName>
</protein>
<reference key="1">
    <citation type="submission" date="2008-06" db="EMBL/GenBank/DDBJ databases">
        <title>Complete sequence of Chlorobaculum parvum NCIB 8327.</title>
        <authorList>
            <consortium name="US DOE Joint Genome Institute"/>
            <person name="Lucas S."/>
            <person name="Copeland A."/>
            <person name="Lapidus A."/>
            <person name="Glavina del Rio T."/>
            <person name="Dalin E."/>
            <person name="Tice H."/>
            <person name="Bruce D."/>
            <person name="Goodwin L."/>
            <person name="Pitluck S."/>
            <person name="Schmutz J."/>
            <person name="Larimer F."/>
            <person name="Land M."/>
            <person name="Hauser L."/>
            <person name="Kyrpides N."/>
            <person name="Mikhailova N."/>
            <person name="Zhao F."/>
            <person name="Li T."/>
            <person name="Liu Z."/>
            <person name="Overmann J."/>
            <person name="Bryant D.A."/>
            <person name="Richardson P."/>
        </authorList>
    </citation>
    <scope>NUCLEOTIDE SEQUENCE [LARGE SCALE GENOMIC DNA]</scope>
    <source>
        <strain>DSM 263 / NCIMB 8327</strain>
    </source>
</reference>
<name>ACPS_CHLP8</name>
<dbReference type="EC" id="2.7.8.7" evidence="1"/>
<dbReference type="EMBL" id="CP001099">
    <property type="protein sequence ID" value="ACF10704.1"/>
    <property type="molecule type" value="Genomic_DNA"/>
</dbReference>
<dbReference type="RefSeq" id="WP_012501537.1">
    <property type="nucleotide sequence ID" value="NC_011027.1"/>
</dbReference>
<dbReference type="SMR" id="B3QR46"/>
<dbReference type="STRING" id="517417.Cpar_0277"/>
<dbReference type="KEGG" id="cpc:Cpar_0277"/>
<dbReference type="eggNOG" id="COG0736">
    <property type="taxonomic scope" value="Bacteria"/>
</dbReference>
<dbReference type="HOGENOM" id="CLU_089696_0_2_10"/>
<dbReference type="OrthoDB" id="517356at2"/>
<dbReference type="Proteomes" id="UP000008811">
    <property type="component" value="Chromosome"/>
</dbReference>
<dbReference type="GO" id="GO:0005737">
    <property type="term" value="C:cytoplasm"/>
    <property type="evidence" value="ECO:0007669"/>
    <property type="project" value="UniProtKB-SubCell"/>
</dbReference>
<dbReference type="GO" id="GO:0008897">
    <property type="term" value="F:holo-[acyl-carrier-protein] synthase activity"/>
    <property type="evidence" value="ECO:0007669"/>
    <property type="project" value="UniProtKB-UniRule"/>
</dbReference>
<dbReference type="GO" id="GO:0000287">
    <property type="term" value="F:magnesium ion binding"/>
    <property type="evidence" value="ECO:0007669"/>
    <property type="project" value="UniProtKB-UniRule"/>
</dbReference>
<dbReference type="GO" id="GO:0006633">
    <property type="term" value="P:fatty acid biosynthetic process"/>
    <property type="evidence" value="ECO:0007669"/>
    <property type="project" value="UniProtKB-UniRule"/>
</dbReference>
<dbReference type="Gene3D" id="3.90.470.20">
    <property type="entry name" value="4'-phosphopantetheinyl transferase domain"/>
    <property type="match status" value="1"/>
</dbReference>
<dbReference type="HAMAP" id="MF_00101">
    <property type="entry name" value="AcpS"/>
    <property type="match status" value="1"/>
</dbReference>
<dbReference type="InterPro" id="IPR008278">
    <property type="entry name" value="4-PPantetheinyl_Trfase_dom"/>
</dbReference>
<dbReference type="InterPro" id="IPR037143">
    <property type="entry name" value="4-PPantetheinyl_Trfase_dom_sf"/>
</dbReference>
<dbReference type="InterPro" id="IPR002582">
    <property type="entry name" value="ACPS"/>
</dbReference>
<dbReference type="InterPro" id="IPR004568">
    <property type="entry name" value="Ppantetheine-prot_Trfase_dom"/>
</dbReference>
<dbReference type="NCBIfam" id="TIGR00516">
    <property type="entry name" value="acpS"/>
    <property type="match status" value="1"/>
</dbReference>
<dbReference type="NCBIfam" id="TIGR00556">
    <property type="entry name" value="pantethn_trn"/>
    <property type="match status" value="1"/>
</dbReference>
<dbReference type="Pfam" id="PF01648">
    <property type="entry name" value="ACPS"/>
    <property type="match status" value="1"/>
</dbReference>
<dbReference type="SUPFAM" id="SSF56214">
    <property type="entry name" value="4'-phosphopantetheinyl transferase"/>
    <property type="match status" value="1"/>
</dbReference>
<organism>
    <name type="scientific">Chlorobaculum parvum (strain DSM 263 / NCIMB 8327)</name>
    <name type="common">Chlorobium vibrioforme subsp. thiosulfatophilum</name>
    <dbReference type="NCBI Taxonomy" id="517417"/>
    <lineage>
        <taxon>Bacteria</taxon>
        <taxon>Pseudomonadati</taxon>
        <taxon>Chlorobiota</taxon>
        <taxon>Chlorobiia</taxon>
        <taxon>Chlorobiales</taxon>
        <taxon>Chlorobiaceae</taxon>
        <taxon>Chlorobaculum</taxon>
    </lineage>
</organism>
<accession>B3QR46</accession>
<evidence type="ECO:0000255" key="1">
    <source>
        <dbReference type="HAMAP-Rule" id="MF_00101"/>
    </source>
</evidence>
<comment type="function">
    <text evidence="1">Transfers the 4'-phosphopantetheine moiety from coenzyme A to a Ser of acyl-carrier-protein.</text>
</comment>
<comment type="catalytic activity">
    <reaction evidence="1">
        <text>apo-[ACP] + CoA = holo-[ACP] + adenosine 3',5'-bisphosphate + H(+)</text>
        <dbReference type="Rhea" id="RHEA:12068"/>
        <dbReference type="Rhea" id="RHEA-COMP:9685"/>
        <dbReference type="Rhea" id="RHEA-COMP:9690"/>
        <dbReference type="ChEBI" id="CHEBI:15378"/>
        <dbReference type="ChEBI" id="CHEBI:29999"/>
        <dbReference type="ChEBI" id="CHEBI:57287"/>
        <dbReference type="ChEBI" id="CHEBI:58343"/>
        <dbReference type="ChEBI" id="CHEBI:64479"/>
        <dbReference type="EC" id="2.7.8.7"/>
    </reaction>
</comment>
<comment type="cofactor">
    <cofactor evidence="1">
        <name>Mg(2+)</name>
        <dbReference type="ChEBI" id="CHEBI:18420"/>
    </cofactor>
</comment>
<comment type="subcellular location">
    <subcellularLocation>
        <location evidence="1">Cytoplasm</location>
    </subcellularLocation>
</comment>
<comment type="similarity">
    <text evidence="1">Belongs to the P-Pant transferase superfamily. AcpS family.</text>
</comment>
<sequence>MEIGVDIVEIARIRAVYERSGKAFMNKVLTAAEIEQCLAKPDPAVSLAGRFAAKEAISKALGSGIGHKLGWHSIEVLNNEAGKPEVTLHAPHLSYRVSISISHDRHSAVAMALVQPL</sequence>
<keyword id="KW-0963">Cytoplasm</keyword>
<keyword id="KW-0275">Fatty acid biosynthesis</keyword>
<keyword id="KW-0276">Fatty acid metabolism</keyword>
<keyword id="KW-0444">Lipid biosynthesis</keyword>
<keyword id="KW-0443">Lipid metabolism</keyword>
<keyword id="KW-0460">Magnesium</keyword>
<keyword id="KW-0479">Metal-binding</keyword>
<keyword id="KW-0808">Transferase</keyword>
<feature type="chain" id="PRO_1000093865" description="Holo-[acyl-carrier-protein] synthase">
    <location>
        <begin position="1"/>
        <end position="117"/>
    </location>
</feature>
<feature type="binding site" evidence="1">
    <location>
        <position position="6"/>
    </location>
    <ligand>
        <name>Mg(2+)</name>
        <dbReference type="ChEBI" id="CHEBI:18420"/>
    </ligand>
</feature>
<feature type="binding site" evidence="1">
    <location>
        <position position="55"/>
    </location>
    <ligand>
        <name>Mg(2+)</name>
        <dbReference type="ChEBI" id="CHEBI:18420"/>
    </ligand>
</feature>
<proteinExistence type="inferred from homology"/>